<feature type="chain" id="PRO_0000193652" description="Eukaryotic translation initiation factor 4E-2">
    <location>
        <begin position="1"/>
        <end position="243"/>
    </location>
</feature>
<organism>
    <name type="scientific">Schizosaccharomyces pombe (strain 972 / ATCC 24843)</name>
    <name type="common">Fission yeast</name>
    <dbReference type="NCBI Taxonomy" id="284812"/>
    <lineage>
        <taxon>Eukaryota</taxon>
        <taxon>Fungi</taxon>
        <taxon>Dikarya</taxon>
        <taxon>Ascomycota</taxon>
        <taxon>Taphrinomycotina</taxon>
        <taxon>Schizosaccharomycetes</taxon>
        <taxon>Schizosaccharomycetales</taxon>
        <taxon>Schizosaccharomycetaceae</taxon>
        <taxon>Schizosaccharomyces</taxon>
    </lineage>
</organism>
<comment type="function">
    <text evidence="1">Recognizes and binds the 7-methylguanosine-containing mRNA cap during an early step in the initiation of protein synthesis and facilitates ribosome binding by inducing the unwinding of the mRNAs secondary structures.</text>
</comment>
<comment type="subunit">
    <text evidence="1">eIF4F is a multi-subunit complex, the composition of which varies with external and internal environmental conditions. It is composed of at least eIF4A, eIF4E and eIF4G. eIF4E is also known to interact with other partners (By similarity).</text>
</comment>
<comment type="similarity">
    <text evidence="2">Belongs to the eukaryotic initiation factor 4E family.</text>
</comment>
<protein>
    <recommendedName>
        <fullName>Eukaryotic translation initiation factor 4E-2</fullName>
        <shortName>eIF-4E-2</shortName>
        <shortName>eIF4E-2</shortName>
    </recommendedName>
    <alternativeName>
        <fullName>eIF-4F 25 kDa subunit 2</fullName>
    </alternativeName>
    <alternativeName>
        <fullName>mRNA cap-binding protein 2</fullName>
    </alternativeName>
</protein>
<gene>
    <name type="primary">tif452</name>
    <name type="ORF">SPBC1709.18</name>
    <name type="ORF">SPBC409.01</name>
</gene>
<reference key="1">
    <citation type="journal article" date="2002" name="Nature">
        <title>The genome sequence of Schizosaccharomyces pombe.</title>
        <authorList>
            <person name="Wood V."/>
            <person name="Gwilliam R."/>
            <person name="Rajandream M.A."/>
            <person name="Lyne M.H."/>
            <person name="Lyne R."/>
            <person name="Stewart A."/>
            <person name="Sgouros J.G."/>
            <person name="Peat N."/>
            <person name="Hayles J."/>
            <person name="Baker S.G."/>
            <person name="Basham D."/>
            <person name="Bowman S."/>
            <person name="Brooks K."/>
            <person name="Brown D."/>
            <person name="Brown S."/>
            <person name="Chillingworth T."/>
            <person name="Churcher C.M."/>
            <person name="Collins M."/>
            <person name="Connor R."/>
            <person name="Cronin A."/>
            <person name="Davis P."/>
            <person name="Feltwell T."/>
            <person name="Fraser A."/>
            <person name="Gentles S."/>
            <person name="Goble A."/>
            <person name="Hamlin N."/>
            <person name="Harris D.E."/>
            <person name="Hidalgo J."/>
            <person name="Hodgson G."/>
            <person name="Holroyd S."/>
            <person name="Hornsby T."/>
            <person name="Howarth S."/>
            <person name="Huckle E.J."/>
            <person name="Hunt S."/>
            <person name="Jagels K."/>
            <person name="James K.D."/>
            <person name="Jones L."/>
            <person name="Jones M."/>
            <person name="Leather S."/>
            <person name="McDonald S."/>
            <person name="McLean J."/>
            <person name="Mooney P."/>
            <person name="Moule S."/>
            <person name="Mungall K.L."/>
            <person name="Murphy L.D."/>
            <person name="Niblett D."/>
            <person name="Odell C."/>
            <person name="Oliver K."/>
            <person name="O'Neil S."/>
            <person name="Pearson D."/>
            <person name="Quail M.A."/>
            <person name="Rabbinowitsch E."/>
            <person name="Rutherford K.M."/>
            <person name="Rutter S."/>
            <person name="Saunders D."/>
            <person name="Seeger K."/>
            <person name="Sharp S."/>
            <person name="Skelton J."/>
            <person name="Simmonds M.N."/>
            <person name="Squares R."/>
            <person name="Squares S."/>
            <person name="Stevens K."/>
            <person name="Taylor K."/>
            <person name="Taylor R.G."/>
            <person name="Tivey A."/>
            <person name="Walsh S.V."/>
            <person name="Warren T."/>
            <person name="Whitehead S."/>
            <person name="Woodward J.R."/>
            <person name="Volckaert G."/>
            <person name="Aert R."/>
            <person name="Robben J."/>
            <person name="Grymonprez B."/>
            <person name="Weltjens I."/>
            <person name="Vanstreels E."/>
            <person name="Rieger M."/>
            <person name="Schaefer M."/>
            <person name="Mueller-Auer S."/>
            <person name="Gabel C."/>
            <person name="Fuchs M."/>
            <person name="Duesterhoeft A."/>
            <person name="Fritzc C."/>
            <person name="Holzer E."/>
            <person name="Moestl D."/>
            <person name="Hilbert H."/>
            <person name="Borzym K."/>
            <person name="Langer I."/>
            <person name="Beck A."/>
            <person name="Lehrach H."/>
            <person name="Reinhardt R."/>
            <person name="Pohl T.M."/>
            <person name="Eger P."/>
            <person name="Zimmermann W."/>
            <person name="Wedler H."/>
            <person name="Wambutt R."/>
            <person name="Purnelle B."/>
            <person name="Goffeau A."/>
            <person name="Cadieu E."/>
            <person name="Dreano S."/>
            <person name="Gloux S."/>
            <person name="Lelaure V."/>
            <person name="Mottier S."/>
            <person name="Galibert F."/>
            <person name="Aves S.J."/>
            <person name="Xiang Z."/>
            <person name="Hunt C."/>
            <person name="Moore K."/>
            <person name="Hurst S.M."/>
            <person name="Lucas M."/>
            <person name="Rochet M."/>
            <person name="Gaillardin C."/>
            <person name="Tallada V.A."/>
            <person name="Garzon A."/>
            <person name="Thode G."/>
            <person name="Daga R.R."/>
            <person name="Cruzado L."/>
            <person name="Jimenez J."/>
            <person name="Sanchez M."/>
            <person name="del Rey F."/>
            <person name="Benito J."/>
            <person name="Dominguez A."/>
            <person name="Revuelta J.L."/>
            <person name="Moreno S."/>
            <person name="Armstrong J."/>
            <person name="Forsburg S.L."/>
            <person name="Cerutti L."/>
            <person name="Lowe T."/>
            <person name="McCombie W.R."/>
            <person name="Paulsen I."/>
            <person name="Potashkin J."/>
            <person name="Shpakovski G.V."/>
            <person name="Ussery D."/>
            <person name="Barrell B.G."/>
            <person name="Nurse P."/>
        </authorList>
    </citation>
    <scope>NUCLEOTIDE SEQUENCE [LARGE SCALE GENOMIC DNA]</scope>
    <source>
        <strain>972 / ATCC 24843</strain>
    </source>
</reference>
<name>IF4E2_SCHPO</name>
<proteinExistence type="inferred from homology"/>
<accession>O74743</accession>
<accession>Q9UUB9</accession>
<evidence type="ECO:0000250" key="1"/>
<evidence type="ECO:0000305" key="2"/>
<dbReference type="EMBL" id="CU329671">
    <property type="protein sequence ID" value="CAA21257.1"/>
    <property type="molecule type" value="Genomic_DNA"/>
</dbReference>
<dbReference type="PIR" id="T39646">
    <property type="entry name" value="T39646"/>
</dbReference>
<dbReference type="RefSeq" id="NP_595451.1">
    <property type="nucleotide sequence ID" value="NM_001021360.2"/>
</dbReference>
<dbReference type="SMR" id="O74743"/>
<dbReference type="BioGRID" id="276416">
    <property type="interactions" value="30"/>
</dbReference>
<dbReference type="FunCoup" id="O74743">
    <property type="interactions" value="418"/>
</dbReference>
<dbReference type="STRING" id="284812.O74743"/>
<dbReference type="iPTMnet" id="O74743"/>
<dbReference type="PaxDb" id="4896-SPBC1709.18.1"/>
<dbReference type="EnsemblFungi" id="SPBC1709.18.1">
    <property type="protein sequence ID" value="SPBC1709.18.1:pep"/>
    <property type="gene ID" value="SPBC1709.18"/>
</dbReference>
<dbReference type="GeneID" id="2539870"/>
<dbReference type="KEGG" id="spo:2539870"/>
<dbReference type="PomBase" id="SPBC1709.18">
    <property type="gene designation" value="tif452"/>
</dbReference>
<dbReference type="VEuPathDB" id="FungiDB:SPBC1709.18"/>
<dbReference type="eggNOG" id="KOG1670">
    <property type="taxonomic scope" value="Eukaryota"/>
</dbReference>
<dbReference type="HOGENOM" id="CLU_043552_2_2_1"/>
<dbReference type="InParanoid" id="O74743"/>
<dbReference type="OMA" id="VKPRICL"/>
<dbReference type="PhylomeDB" id="O74743"/>
<dbReference type="Reactome" id="R-SPO-156827">
    <property type="pathway name" value="L13a-mediated translational silencing of Ceruloplasmin expression"/>
</dbReference>
<dbReference type="Reactome" id="R-SPO-159227">
    <property type="pathway name" value="Transport of the SLBP independent Mature mRNA"/>
</dbReference>
<dbReference type="Reactome" id="R-SPO-159231">
    <property type="pathway name" value="Transport of Mature mRNA Derived from an Intronless Transcript"/>
</dbReference>
<dbReference type="Reactome" id="R-SPO-72649">
    <property type="pathway name" value="Translation initiation complex formation"/>
</dbReference>
<dbReference type="Reactome" id="R-SPO-72662">
    <property type="pathway name" value="Activation of the mRNA upon binding of the cap-binding complex and eIFs, and subsequent binding to 43S"/>
</dbReference>
<dbReference type="Reactome" id="R-SPO-72702">
    <property type="pathway name" value="Ribosomal scanning and start codon recognition"/>
</dbReference>
<dbReference type="Reactome" id="R-SPO-72706">
    <property type="pathway name" value="GTP hydrolysis and joining of the 60S ribosomal subunit"/>
</dbReference>
<dbReference type="PRO" id="PR:O74743"/>
<dbReference type="Proteomes" id="UP000002485">
    <property type="component" value="Chromosome II"/>
</dbReference>
<dbReference type="GO" id="GO:0005829">
    <property type="term" value="C:cytosol"/>
    <property type="evidence" value="ECO:0007005"/>
    <property type="project" value="PomBase"/>
</dbReference>
<dbReference type="GO" id="GO:0016281">
    <property type="term" value="C:eukaryotic translation initiation factor 4F complex"/>
    <property type="evidence" value="ECO:0000318"/>
    <property type="project" value="GO_Central"/>
</dbReference>
<dbReference type="GO" id="GO:0000340">
    <property type="term" value="F:RNA 7-methylguanosine cap binding"/>
    <property type="evidence" value="ECO:0000318"/>
    <property type="project" value="GO_Central"/>
</dbReference>
<dbReference type="GO" id="GO:0003743">
    <property type="term" value="F:translation initiation factor activity"/>
    <property type="evidence" value="ECO:0000318"/>
    <property type="project" value="GO_Central"/>
</dbReference>
<dbReference type="GO" id="GO:0002183">
    <property type="term" value="P:cytoplasmic translational initiation"/>
    <property type="evidence" value="ECO:0000266"/>
    <property type="project" value="PomBase"/>
</dbReference>
<dbReference type="GO" id="GO:0000184">
    <property type="term" value="P:nuclear-transcribed mRNA catabolic process, nonsense-mediated decay"/>
    <property type="evidence" value="ECO:0000266"/>
    <property type="project" value="PomBase"/>
</dbReference>
<dbReference type="GO" id="GO:0006417">
    <property type="term" value="P:regulation of translation"/>
    <property type="evidence" value="ECO:0007669"/>
    <property type="project" value="UniProtKB-KW"/>
</dbReference>
<dbReference type="GO" id="GO:0006413">
    <property type="term" value="P:translational initiation"/>
    <property type="evidence" value="ECO:0000318"/>
    <property type="project" value="GO_Central"/>
</dbReference>
<dbReference type="FunFam" id="3.30.760.10:FF:000004">
    <property type="entry name" value="Eukaryotic translation initiation factor 4E-1"/>
    <property type="match status" value="1"/>
</dbReference>
<dbReference type="Gene3D" id="3.30.760.10">
    <property type="entry name" value="RNA Cap, Translation Initiation Factor Eif4e"/>
    <property type="match status" value="1"/>
</dbReference>
<dbReference type="InterPro" id="IPR023398">
    <property type="entry name" value="TIF_eIF4e-like"/>
</dbReference>
<dbReference type="InterPro" id="IPR001040">
    <property type="entry name" value="TIF_eIF_4E"/>
</dbReference>
<dbReference type="InterPro" id="IPR019770">
    <property type="entry name" value="TIF_eIF_4E_CS"/>
</dbReference>
<dbReference type="PANTHER" id="PTHR11960">
    <property type="entry name" value="EUKARYOTIC TRANSLATION INITIATION FACTOR 4E RELATED"/>
    <property type="match status" value="1"/>
</dbReference>
<dbReference type="PANTHER" id="PTHR11960:SF8">
    <property type="entry name" value="EUKARYOTIC TRANSLATION INITIATION FACTOR 4E1-RELATED"/>
    <property type="match status" value="1"/>
</dbReference>
<dbReference type="Pfam" id="PF01652">
    <property type="entry name" value="IF4E"/>
    <property type="match status" value="1"/>
</dbReference>
<dbReference type="SUPFAM" id="SSF55418">
    <property type="entry name" value="eIF4e-like"/>
    <property type="match status" value="1"/>
</dbReference>
<dbReference type="PROSITE" id="PS00813">
    <property type="entry name" value="IF4E"/>
    <property type="match status" value="1"/>
</dbReference>
<sequence>MADAEDSRHSKNEGFPNTSLITEKLDLLDLFGSPKVKTEREGRPARLLEGLSAVNAETAFVKTHPLQHEWTLWFLKPPTQGLEWSDLLKEIISFKTVEEFWGIFKTISKASMLPAKSDYSYFLKGIRPEWEDPQNMNGGKWAYQSKHKGSNLDELWLYMVLAAIGETLDPTGKEVTGVVCNMRKGFYRIAVWTRNCNDKDVLEKIGLRFKEVLGISDKETIEYSAHEDSSKAGSMRAKTRMSL</sequence>
<keyword id="KW-0396">Initiation factor</keyword>
<keyword id="KW-0648">Protein biosynthesis</keyword>
<keyword id="KW-1185">Reference proteome</keyword>
<keyword id="KW-0694">RNA-binding</keyword>
<keyword id="KW-0810">Translation regulation</keyword>